<proteinExistence type="evidence at protein level"/>
<comment type="function">
    <text>Required for extrapulmonary dissemination. Mediates adherence to epithelial cells by binding to sulfated glycoconjugates present at the surface of these cells; binds heparin, dextran sulfate, fucoidan and chondroitin sulfate. Promotes hemagglutination of erythrocytes of certain host species. Induces mycobacterial aggregation.</text>
</comment>
<comment type="subcellular location">
    <subcellularLocation>
        <location>Cell surface</location>
    </subcellularLocation>
</comment>
<comment type="domain">
    <text>Heparin binding seems to require the C-terminal domain of HbhA. Progressive truncations from the C-terminal end diminish the affinity for heparin.</text>
</comment>
<comment type="PTM">
    <text>Glycosylated. Glycosylation may protect the protein from proteolytic degradation and be important for hemagglutination. It suggests that the carbohydrate moiety may be located within the C-terminal domain of HbhA.</text>
</comment>
<comment type="miscellaneous">
    <text>Serum from patients diagnosed with active tuberculosis that had not been vaccinated contains antibodies that recognize HbhA, whereas serum from healthy individuals does not contain any.</text>
</comment>
<comment type="similarity">
    <text evidence="3">To M.leprae HbhA.</text>
</comment>
<name>HBHA_MYCBP</name>
<evidence type="ECO:0000256" key="1">
    <source>
        <dbReference type="SAM" id="MobiDB-lite"/>
    </source>
</evidence>
<evidence type="ECO:0000269" key="2">
    <source>
    </source>
</evidence>
<evidence type="ECO:0000305" key="3"/>
<dbReference type="EMBL" id="AM408590">
    <property type="protein sequence ID" value="CAL70501.1"/>
    <property type="molecule type" value="Genomic_DNA"/>
</dbReference>
<dbReference type="RefSeq" id="WP_003402339.1">
    <property type="nucleotide sequence ID" value="NC_008769.1"/>
</dbReference>
<dbReference type="SMR" id="A1KFU9"/>
<dbReference type="GeneID" id="45424436"/>
<dbReference type="KEGG" id="mbb:BCG_0516"/>
<dbReference type="HOGENOM" id="CLU_089817_1_0_11"/>
<dbReference type="Proteomes" id="UP000001472">
    <property type="component" value="Chromosome"/>
</dbReference>
<dbReference type="GO" id="GO:0009986">
    <property type="term" value="C:cell surface"/>
    <property type="evidence" value="ECO:0007669"/>
    <property type="project" value="UniProtKB-SubCell"/>
</dbReference>
<dbReference type="GO" id="GO:0008201">
    <property type="term" value="F:heparin binding"/>
    <property type="evidence" value="ECO:0007669"/>
    <property type="project" value="UniProtKB-KW"/>
</dbReference>
<dbReference type="GO" id="GO:0007155">
    <property type="term" value="P:cell adhesion"/>
    <property type="evidence" value="ECO:0007669"/>
    <property type="project" value="UniProtKB-KW"/>
</dbReference>
<dbReference type="Gene3D" id="1.20.5.1230">
    <property type="entry name" value="Apolipoprotein A-I"/>
    <property type="match status" value="1"/>
</dbReference>
<dbReference type="SUPFAM" id="SSF58113">
    <property type="entry name" value="Apolipoprotein A-I"/>
    <property type="match status" value="1"/>
</dbReference>
<protein>
    <recommendedName>
        <fullName>Heparin-binding hemagglutinin</fullName>
    </recommendedName>
    <alternativeName>
        <fullName>Adhesin</fullName>
    </alternativeName>
</protein>
<sequence>MAENSNIDDIKAPLLAALGAADLALATVNELITNLRERAEETRTDTRSRVEESRARLTKLQEDLPEQLTELREKFTAEELRKAAEGYLEAATSRYNELVERGEAALERLRSQQSFEEVSARAEGYVDQAVELTQEALGTVASQTRAVGERAAKLVGIELPKKAAPAKKAAPAKKAAPAKKAAAKKAPAKKAAAKKVTQK</sequence>
<organism>
    <name type="scientific">Mycobacterium bovis (strain BCG / Pasteur 1173P2)</name>
    <dbReference type="NCBI Taxonomy" id="410289"/>
    <lineage>
        <taxon>Bacteria</taxon>
        <taxon>Bacillati</taxon>
        <taxon>Actinomycetota</taxon>
        <taxon>Actinomycetes</taxon>
        <taxon>Mycobacteriales</taxon>
        <taxon>Mycobacteriaceae</taxon>
        <taxon>Mycobacterium</taxon>
        <taxon>Mycobacterium tuberculosis complex</taxon>
    </lineage>
</organism>
<reference key="1">
    <citation type="journal article" date="1998" name="Proc. Natl. Acad. Sci. U.S.A.">
        <title>Molecular characterization of the mycobacterial heparin-binding hemagglutinin, a mycobacterial adhesin.</title>
        <authorList>
            <person name="Menozzi F.D."/>
            <person name="Bischoff R."/>
            <person name="Fort E."/>
            <person name="Brennan M.J."/>
            <person name="Locht C."/>
        </authorList>
    </citation>
    <scope>NUCLEOTIDE SEQUENCE [GENOMIC DNA]</scope>
    <scope>PROTEIN SEQUENCE OF 61-68; 75-81; 83-92 AND 123-138</scope>
    <scope>CHARACTERIZATION</scope>
</reference>
<reference key="2">
    <citation type="journal article" date="2007" name="Proc. Natl. Acad. Sci. U.S.A.">
        <title>Genome plasticity of BCG and impact on vaccine efficacy.</title>
        <authorList>
            <person name="Brosch R."/>
            <person name="Gordon S.V."/>
            <person name="Garnier T."/>
            <person name="Eiglmeier K."/>
            <person name="Frigui W."/>
            <person name="Valenti P."/>
            <person name="Dos Santos S."/>
            <person name="Duthoy S."/>
            <person name="Lacroix C."/>
            <person name="Garcia-Pelayo C."/>
            <person name="Inwald J.K."/>
            <person name="Golby P."/>
            <person name="Garcia J.N."/>
            <person name="Hewinson R.G."/>
            <person name="Behr M.A."/>
            <person name="Quail M.A."/>
            <person name="Churcher C."/>
            <person name="Barrell B.G."/>
            <person name="Parkhill J."/>
            <person name="Cole S.T."/>
        </authorList>
    </citation>
    <scope>NUCLEOTIDE SEQUENCE [LARGE SCALE GENOMIC DNA]</scope>
    <source>
        <strain>BCG / Pasteur 1173P2</strain>
    </source>
</reference>
<reference key="3">
    <citation type="journal article" date="1996" name="J. Exp. Med.">
        <title>Identification of a heparin-binding hemagglutinin present in Mycobacteria.</title>
        <authorList>
            <person name="Menozzi F.D."/>
            <person name="Rouse J.H."/>
            <person name="Alavi M."/>
            <person name="Laude-Sharp M."/>
            <person name="Muller J."/>
            <person name="Bischoff R."/>
            <person name="Brennan M.J."/>
            <person name="Locht C."/>
        </authorList>
    </citation>
    <scope>PROTEIN SEQUENCE OF 2-17</scope>
    <scope>CHARACTERIZATION</scope>
</reference>
<feature type="initiator methionine" description="Removed" evidence="2">
    <location>
        <position position="1"/>
    </location>
</feature>
<feature type="chain" id="PRO_0000285179" description="Heparin-binding hemagglutinin">
    <location>
        <begin position="2"/>
        <end position="199"/>
    </location>
</feature>
<feature type="region of interest" description="Disordered" evidence="1">
    <location>
        <begin position="162"/>
        <end position="199"/>
    </location>
</feature>
<feature type="compositionally biased region" description="Low complexity" evidence="1">
    <location>
        <begin position="162"/>
        <end position="180"/>
    </location>
</feature>
<feature type="compositionally biased region" description="Basic residues" evidence="1">
    <location>
        <begin position="181"/>
        <end position="199"/>
    </location>
</feature>
<accession>A1KFU9</accession>
<accession>O85733</accession>
<accession>P0A5P7</accession>
<accession>Q11142</accession>
<keyword id="KW-0130">Cell adhesion</keyword>
<keyword id="KW-0903">Direct protein sequencing</keyword>
<keyword id="KW-0325">Glycoprotein</keyword>
<keyword id="KW-0348">Hemagglutinin</keyword>
<keyword id="KW-0358">Heparin-binding</keyword>
<keyword id="KW-0843">Virulence</keyword>
<gene>
    <name type="primary">hbhA</name>
    <name type="ordered locus">BCG_0516</name>
</gene>